<proteinExistence type="inferred from homology"/>
<keyword id="KW-0028">Amino-acid biosynthesis</keyword>
<keyword id="KW-0057">Aromatic amino acid biosynthesis</keyword>
<keyword id="KW-0456">Lyase</keyword>
<keyword id="KW-0663">Pyridoxal phosphate</keyword>
<keyword id="KW-1185">Reference proteome</keyword>
<keyword id="KW-0822">Tryptophan biosynthesis</keyword>
<gene>
    <name type="primary">trpB2</name>
    <name type="ordered locus">all3794</name>
</gene>
<feature type="chain" id="PRO_0000098911" description="Tryptophan synthase beta chain 2">
    <location>
        <begin position="1"/>
        <end position="413"/>
    </location>
</feature>
<feature type="modified residue" description="N6-(pyridoxal phosphate)lysine" evidence="1">
    <location>
        <position position="107"/>
    </location>
</feature>
<protein>
    <recommendedName>
        <fullName>Tryptophan synthase beta chain 2</fullName>
        <ecNumber>4.2.1.20</ecNumber>
    </recommendedName>
</protein>
<evidence type="ECO:0000250" key="1"/>
<evidence type="ECO:0000305" key="2"/>
<name>TRPB2_NOSS1</name>
<sequence>MTTTPLSPSTPSNVQVPDIQGRFGRFGGKYVPETLMPALAELETAYQQYRNDPGFQAELQQLLRDYVGRATPLYFAERLTAHYARPDGTGAQIYLKREDLNHTGAHKINNALGQVLLAKRMGKQRIIAETGAGQHGVATATVCARFGLECVIYMGVHDMERQALNVFRMRLMGAEVRPVAAGTGTLKDATSEAIRDWVTNVETTHYILGSVAGPHPYPMMVRDFHAVIGQETRAQALEKWGGLPDILLACVGGGSNAMGLFYEFVNESSIKLIGVEAAGEGVNTEKHAATLTKGRVGVLHGAMSYLLQDEDGQVIEAHSISAGLDYPGVGPEHSYLKDVGRAEYYSVTDEEALAAFQRLSRLEGIIPALETAHAIAYLETLCPQLDGSPRIVINCSGRGDKDVQTVAKFLIPQ</sequence>
<accession>Q8YQM6</accession>
<reference key="1">
    <citation type="journal article" date="2001" name="DNA Res.">
        <title>Complete genomic sequence of the filamentous nitrogen-fixing cyanobacterium Anabaena sp. strain PCC 7120.</title>
        <authorList>
            <person name="Kaneko T."/>
            <person name="Nakamura Y."/>
            <person name="Wolk C.P."/>
            <person name="Kuritz T."/>
            <person name="Sasamoto S."/>
            <person name="Watanabe A."/>
            <person name="Iriguchi M."/>
            <person name="Ishikawa A."/>
            <person name="Kawashima K."/>
            <person name="Kimura T."/>
            <person name="Kishida Y."/>
            <person name="Kohara M."/>
            <person name="Matsumoto M."/>
            <person name="Matsuno A."/>
            <person name="Muraki A."/>
            <person name="Nakazaki N."/>
            <person name="Shimpo S."/>
            <person name="Sugimoto M."/>
            <person name="Takazawa M."/>
            <person name="Yamada M."/>
            <person name="Yasuda M."/>
            <person name="Tabata S."/>
        </authorList>
    </citation>
    <scope>NUCLEOTIDE SEQUENCE [LARGE SCALE GENOMIC DNA]</scope>
    <source>
        <strain>PCC 7120 / SAG 25.82 / UTEX 2576</strain>
    </source>
</reference>
<comment type="function">
    <text evidence="1">The beta subunit is responsible for the synthesis of L-tryptophan from indole and L-serine.</text>
</comment>
<comment type="catalytic activity">
    <reaction>
        <text>(1S,2R)-1-C-(indol-3-yl)glycerol 3-phosphate + L-serine = D-glyceraldehyde 3-phosphate + L-tryptophan + H2O</text>
        <dbReference type="Rhea" id="RHEA:10532"/>
        <dbReference type="ChEBI" id="CHEBI:15377"/>
        <dbReference type="ChEBI" id="CHEBI:33384"/>
        <dbReference type="ChEBI" id="CHEBI:57912"/>
        <dbReference type="ChEBI" id="CHEBI:58866"/>
        <dbReference type="ChEBI" id="CHEBI:59776"/>
        <dbReference type="EC" id="4.2.1.20"/>
    </reaction>
</comment>
<comment type="cofactor">
    <cofactor evidence="1">
        <name>pyridoxal 5'-phosphate</name>
        <dbReference type="ChEBI" id="CHEBI:597326"/>
    </cofactor>
</comment>
<comment type="pathway">
    <text>Amino-acid biosynthesis; L-tryptophan biosynthesis; L-tryptophan from chorismate: step 5/5.</text>
</comment>
<comment type="subunit">
    <text evidence="1">Tetramer of two alpha and two beta chains.</text>
</comment>
<comment type="similarity">
    <text evidence="2">Belongs to the TrpB family.</text>
</comment>
<dbReference type="EC" id="4.2.1.20"/>
<dbReference type="EMBL" id="BA000019">
    <property type="protein sequence ID" value="BAB75493.1"/>
    <property type="molecule type" value="Genomic_DNA"/>
</dbReference>
<dbReference type="PIR" id="AC2280">
    <property type="entry name" value="AC2280"/>
</dbReference>
<dbReference type="SMR" id="Q8YQM6"/>
<dbReference type="STRING" id="103690.gene:10495836"/>
<dbReference type="KEGG" id="ana:all3794"/>
<dbReference type="eggNOG" id="COG0133">
    <property type="taxonomic scope" value="Bacteria"/>
</dbReference>
<dbReference type="OrthoDB" id="9766131at2"/>
<dbReference type="UniPathway" id="UPA00035">
    <property type="reaction ID" value="UER00044"/>
</dbReference>
<dbReference type="Proteomes" id="UP000002483">
    <property type="component" value="Chromosome"/>
</dbReference>
<dbReference type="GO" id="GO:0005737">
    <property type="term" value="C:cytoplasm"/>
    <property type="evidence" value="ECO:0007669"/>
    <property type="project" value="TreeGrafter"/>
</dbReference>
<dbReference type="GO" id="GO:0004834">
    <property type="term" value="F:tryptophan synthase activity"/>
    <property type="evidence" value="ECO:0007669"/>
    <property type="project" value="UniProtKB-UniRule"/>
</dbReference>
<dbReference type="CDD" id="cd06446">
    <property type="entry name" value="Trp-synth_B"/>
    <property type="match status" value="1"/>
</dbReference>
<dbReference type="FunFam" id="3.40.50.1100:FF:000001">
    <property type="entry name" value="Tryptophan synthase beta chain"/>
    <property type="match status" value="1"/>
</dbReference>
<dbReference type="FunFam" id="3.40.50.1100:FF:000004">
    <property type="entry name" value="Tryptophan synthase beta chain"/>
    <property type="match status" value="1"/>
</dbReference>
<dbReference type="Gene3D" id="3.40.50.1100">
    <property type="match status" value="2"/>
</dbReference>
<dbReference type="HAMAP" id="MF_00133">
    <property type="entry name" value="Trp_synth_beta"/>
    <property type="match status" value="1"/>
</dbReference>
<dbReference type="InterPro" id="IPR006653">
    <property type="entry name" value="Trp_synth_b_CS"/>
</dbReference>
<dbReference type="InterPro" id="IPR006654">
    <property type="entry name" value="Trp_synth_beta"/>
</dbReference>
<dbReference type="InterPro" id="IPR023026">
    <property type="entry name" value="Trp_synth_beta/beta-like"/>
</dbReference>
<dbReference type="InterPro" id="IPR001926">
    <property type="entry name" value="TrpB-like_PALP"/>
</dbReference>
<dbReference type="InterPro" id="IPR036052">
    <property type="entry name" value="TrpB-like_PALP_sf"/>
</dbReference>
<dbReference type="NCBIfam" id="TIGR00263">
    <property type="entry name" value="trpB"/>
    <property type="match status" value="1"/>
</dbReference>
<dbReference type="PANTHER" id="PTHR48077:SF3">
    <property type="entry name" value="TRYPTOPHAN SYNTHASE"/>
    <property type="match status" value="1"/>
</dbReference>
<dbReference type="PANTHER" id="PTHR48077">
    <property type="entry name" value="TRYPTOPHAN SYNTHASE-RELATED"/>
    <property type="match status" value="1"/>
</dbReference>
<dbReference type="Pfam" id="PF00291">
    <property type="entry name" value="PALP"/>
    <property type="match status" value="1"/>
</dbReference>
<dbReference type="PIRSF" id="PIRSF001413">
    <property type="entry name" value="Trp_syn_beta"/>
    <property type="match status" value="1"/>
</dbReference>
<dbReference type="SUPFAM" id="SSF53686">
    <property type="entry name" value="Tryptophan synthase beta subunit-like PLP-dependent enzymes"/>
    <property type="match status" value="1"/>
</dbReference>
<dbReference type="PROSITE" id="PS00168">
    <property type="entry name" value="TRP_SYNTHASE_BETA"/>
    <property type="match status" value="1"/>
</dbReference>
<organism>
    <name type="scientific">Nostoc sp. (strain PCC 7120 / SAG 25.82 / UTEX 2576)</name>
    <dbReference type="NCBI Taxonomy" id="103690"/>
    <lineage>
        <taxon>Bacteria</taxon>
        <taxon>Bacillati</taxon>
        <taxon>Cyanobacteriota</taxon>
        <taxon>Cyanophyceae</taxon>
        <taxon>Nostocales</taxon>
        <taxon>Nostocaceae</taxon>
        <taxon>Nostoc</taxon>
    </lineage>
</organism>